<name>METN1_RHOJR</name>
<sequence>MIEVRSVTKRFGKGSRSVEVLHDIDFSVGTGQIAAVIGQSGAGKTTLSRIISLLERPSEGRILLDGTDVSGLSERRLRDQRRAIGTIFQASSLLARRTAAENVALPLEFAGVGRSERRARVAELLGRVGLSDKADLYPRQLSGGQRQRVGIARSLALAPKVLVSDEATSGLDPNTTRSILALLRELRDDLGLTIVLITHEMDVVRQVADVVTVLDAGRVVESGPVIELLRDPHSELGVGLLPDRSHITAEDRDVLWHVTYGSDTVPTNWIELLGKATGRSIGVLSGTVESVGGRPAGRVTISVAGEHPSVGDLLSSWGLHGTRVDDDASARTTEEAAA</sequence>
<accession>Q0SFY5</accession>
<feature type="chain" id="PRO_0000270368" description="Methionine import ATP-binding protein MetN 1">
    <location>
        <begin position="1"/>
        <end position="338"/>
    </location>
</feature>
<feature type="domain" description="ABC transporter" evidence="1">
    <location>
        <begin position="2"/>
        <end position="241"/>
    </location>
</feature>
<feature type="binding site" evidence="1">
    <location>
        <begin position="38"/>
        <end position="45"/>
    </location>
    <ligand>
        <name>ATP</name>
        <dbReference type="ChEBI" id="CHEBI:30616"/>
    </ligand>
</feature>
<comment type="function">
    <text evidence="1">Part of the ABC transporter complex MetNIQ involved in methionine import. Responsible for energy coupling to the transport system.</text>
</comment>
<comment type="catalytic activity">
    <reaction evidence="1">
        <text>L-methionine(out) + ATP + H2O = L-methionine(in) + ADP + phosphate + H(+)</text>
        <dbReference type="Rhea" id="RHEA:29779"/>
        <dbReference type="ChEBI" id="CHEBI:15377"/>
        <dbReference type="ChEBI" id="CHEBI:15378"/>
        <dbReference type="ChEBI" id="CHEBI:30616"/>
        <dbReference type="ChEBI" id="CHEBI:43474"/>
        <dbReference type="ChEBI" id="CHEBI:57844"/>
        <dbReference type="ChEBI" id="CHEBI:456216"/>
        <dbReference type="EC" id="7.4.2.11"/>
    </reaction>
</comment>
<comment type="catalytic activity">
    <reaction evidence="1">
        <text>D-methionine(out) + ATP + H2O = D-methionine(in) + ADP + phosphate + H(+)</text>
        <dbReference type="Rhea" id="RHEA:29767"/>
        <dbReference type="ChEBI" id="CHEBI:15377"/>
        <dbReference type="ChEBI" id="CHEBI:15378"/>
        <dbReference type="ChEBI" id="CHEBI:30616"/>
        <dbReference type="ChEBI" id="CHEBI:43474"/>
        <dbReference type="ChEBI" id="CHEBI:57932"/>
        <dbReference type="ChEBI" id="CHEBI:456216"/>
        <dbReference type="EC" id="7.4.2.11"/>
    </reaction>
</comment>
<comment type="subunit">
    <text evidence="1">The complex is composed of two ATP-binding proteins (MetN), two transmembrane proteins (MetI) and a solute-binding protein (MetQ).</text>
</comment>
<comment type="subcellular location">
    <subcellularLocation>
        <location evidence="1">Cell membrane</location>
        <topology evidence="1">Peripheral membrane protein</topology>
    </subcellularLocation>
</comment>
<comment type="similarity">
    <text evidence="1">Belongs to the ABC transporter superfamily. Methionine importer (TC 3.A.1.24) family.</text>
</comment>
<dbReference type="EC" id="7.4.2.11" evidence="1"/>
<dbReference type="EMBL" id="CP000431">
    <property type="protein sequence ID" value="ABG93551.1"/>
    <property type="molecule type" value="Genomic_DNA"/>
</dbReference>
<dbReference type="RefSeq" id="WP_011594672.1">
    <property type="nucleotide sequence ID" value="NC_008268.1"/>
</dbReference>
<dbReference type="SMR" id="Q0SFY5"/>
<dbReference type="KEGG" id="rha:RHA1_ro01738"/>
<dbReference type="PATRIC" id="fig|101510.16.peg.1758"/>
<dbReference type="eggNOG" id="COG1135">
    <property type="taxonomic scope" value="Bacteria"/>
</dbReference>
<dbReference type="HOGENOM" id="CLU_000604_1_3_11"/>
<dbReference type="OrthoDB" id="4398079at2"/>
<dbReference type="Proteomes" id="UP000008710">
    <property type="component" value="Chromosome"/>
</dbReference>
<dbReference type="GO" id="GO:0005886">
    <property type="term" value="C:plasma membrane"/>
    <property type="evidence" value="ECO:0007669"/>
    <property type="project" value="UniProtKB-SubCell"/>
</dbReference>
<dbReference type="GO" id="GO:0033232">
    <property type="term" value="F:ABC-type D-methionine transporter activity"/>
    <property type="evidence" value="ECO:0007669"/>
    <property type="project" value="UniProtKB-EC"/>
</dbReference>
<dbReference type="GO" id="GO:0005524">
    <property type="term" value="F:ATP binding"/>
    <property type="evidence" value="ECO:0007669"/>
    <property type="project" value="UniProtKB-KW"/>
</dbReference>
<dbReference type="GO" id="GO:0016887">
    <property type="term" value="F:ATP hydrolysis activity"/>
    <property type="evidence" value="ECO:0007669"/>
    <property type="project" value="InterPro"/>
</dbReference>
<dbReference type="Gene3D" id="3.40.50.300">
    <property type="entry name" value="P-loop containing nucleotide triphosphate hydrolases"/>
    <property type="match status" value="1"/>
</dbReference>
<dbReference type="InterPro" id="IPR003593">
    <property type="entry name" value="AAA+_ATPase"/>
</dbReference>
<dbReference type="InterPro" id="IPR003439">
    <property type="entry name" value="ABC_transporter-like_ATP-bd"/>
</dbReference>
<dbReference type="InterPro" id="IPR017871">
    <property type="entry name" value="ABC_transporter-like_CS"/>
</dbReference>
<dbReference type="InterPro" id="IPR050086">
    <property type="entry name" value="MetN_ABC_transporter-like"/>
</dbReference>
<dbReference type="InterPro" id="IPR027417">
    <property type="entry name" value="P-loop_NTPase"/>
</dbReference>
<dbReference type="PANTHER" id="PTHR43166">
    <property type="entry name" value="AMINO ACID IMPORT ATP-BINDING PROTEIN"/>
    <property type="match status" value="1"/>
</dbReference>
<dbReference type="PANTHER" id="PTHR43166:SF30">
    <property type="entry name" value="METHIONINE IMPORT ATP-BINDING PROTEIN METN"/>
    <property type="match status" value="1"/>
</dbReference>
<dbReference type="Pfam" id="PF00005">
    <property type="entry name" value="ABC_tran"/>
    <property type="match status" value="1"/>
</dbReference>
<dbReference type="SMART" id="SM00382">
    <property type="entry name" value="AAA"/>
    <property type="match status" value="1"/>
</dbReference>
<dbReference type="SUPFAM" id="SSF52540">
    <property type="entry name" value="P-loop containing nucleoside triphosphate hydrolases"/>
    <property type="match status" value="1"/>
</dbReference>
<dbReference type="PROSITE" id="PS00211">
    <property type="entry name" value="ABC_TRANSPORTER_1"/>
    <property type="match status" value="1"/>
</dbReference>
<dbReference type="PROSITE" id="PS50893">
    <property type="entry name" value="ABC_TRANSPORTER_2"/>
    <property type="match status" value="1"/>
</dbReference>
<dbReference type="PROSITE" id="PS51264">
    <property type="entry name" value="METN"/>
    <property type="match status" value="1"/>
</dbReference>
<proteinExistence type="inferred from homology"/>
<evidence type="ECO:0000255" key="1">
    <source>
        <dbReference type="HAMAP-Rule" id="MF_01719"/>
    </source>
</evidence>
<reference key="1">
    <citation type="journal article" date="2006" name="Proc. Natl. Acad. Sci. U.S.A.">
        <title>The complete genome of Rhodococcus sp. RHA1 provides insights into a catabolic powerhouse.</title>
        <authorList>
            <person name="McLeod M.P."/>
            <person name="Warren R.L."/>
            <person name="Hsiao W.W.L."/>
            <person name="Araki N."/>
            <person name="Myhre M."/>
            <person name="Fernandes C."/>
            <person name="Miyazawa D."/>
            <person name="Wong W."/>
            <person name="Lillquist A.L."/>
            <person name="Wang D."/>
            <person name="Dosanjh M."/>
            <person name="Hara H."/>
            <person name="Petrescu A."/>
            <person name="Morin R.D."/>
            <person name="Yang G."/>
            <person name="Stott J.M."/>
            <person name="Schein J.E."/>
            <person name="Shin H."/>
            <person name="Smailus D."/>
            <person name="Siddiqui A.S."/>
            <person name="Marra M.A."/>
            <person name="Jones S.J.M."/>
            <person name="Holt R."/>
            <person name="Brinkman F.S.L."/>
            <person name="Miyauchi K."/>
            <person name="Fukuda M."/>
            <person name="Davies J.E."/>
            <person name="Mohn W.W."/>
            <person name="Eltis L.D."/>
        </authorList>
    </citation>
    <scope>NUCLEOTIDE SEQUENCE [LARGE SCALE GENOMIC DNA]</scope>
    <source>
        <strain>RHA1</strain>
    </source>
</reference>
<organism>
    <name type="scientific">Rhodococcus jostii (strain RHA1)</name>
    <dbReference type="NCBI Taxonomy" id="101510"/>
    <lineage>
        <taxon>Bacteria</taxon>
        <taxon>Bacillati</taxon>
        <taxon>Actinomycetota</taxon>
        <taxon>Actinomycetes</taxon>
        <taxon>Mycobacteriales</taxon>
        <taxon>Nocardiaceae</taxon>
        <taxon>Rhodococcus</taxon>
    </lineage>
</organism>
<protein>
    <recommendedName>
        <fullName evidence="1">Methionine import ATP-binding protein MetN 1</fullName>
        <ecNumber evidence="1">7.4.2.11</ecNumber>
    </recommendedName>
</protein>
<gene>
    <name evidence="1" type="primary">metN1</name>
    <name type="ordered locus">RHA1_ro01738</name>
</gene>
<keyword id="KW-0029">Amino-acid transport</keyword>
<keyword id="KW-0067">ATP-binding</keyword>
<keyword id="KW-1003">Cell membrane</keyword>
<keyword id="KW-0472">Membrane</keyword>
<keyword id="KW-0547">Nucleotide-binding</keyword>
<keyword id="KW-1278">Translocase</keyword>
<keyword id="KW-0813">Transport</keyword>